<reference key="1">
    <citation type="journal article" date="2001" name="Gene">
        <title>Molecular characterization of homologues of both subunits A (SPO11) and B of the archaebacterial topoisomerase 6 in plants.</title>
        <authorList>
            <person name="Hartung F."/>
            <person name="Puchta H."/>
        </authorList>
    </citation>
    <scope>NUCLEOTIDE SEQUENCE [MRNA]</scope>
    <scope>TISSUE SPECIFICITY</scope>
    <scope>INTERACTION WITH TOP6A; SPO11-1 AND SPO11-2</scope>
</reference>
<reference key="2">
    <citation type="journal article" date="2002" name="Proc. Natl. Acad. Sci. U.S.A.">
        <title>A crucial role for the putative Arabidopsis topoisomerase VI in plant growth and development.</title>
        <authorList>
            <person name="Yin Y."/>
            <person name="Cheong H."/>
            <person name="Friedrichsen D."/>
            <person name="Zhao Y."/>
            <person name="Hu J."/>
            <person name="Mora-Garcia S."/>
            <person name="Chory J."/>
        </authorList>
    </citation>
    <scope>NUCLEOTIDE SEQUENCE [GENOMIC DNA]</scope>
    <scope>FUNCTION</scope>
    <scope>DISRUPTION PHENOTYPE</scope>
</reference>
<reference key="3">
    <citation type="journal article" date="2002" name="Curr. Biol.">
        <title>DNA topoisomerase VI is essential for endoreduplication in Arabidopsis.</title>
        <authorList>
            <person name="Sugimoto-Shirasu K."/>
            <person name="Stacey N.J."/>
            <person name="Corsar J."/>
            <person name="Roberts K."/>
            <person name="McCann M.C."/>
        </authorList>
    </citation>
    <scope>NUCLEOTIDE SEQUENCE [GENOMIC DNA]</scope>
    <scope>FUNCTION</scope>
</reference>
<reference key="4">
    <citation type="journal article" date="2005" name="Proc. Natl. Acad. Sci. U.S.A.">
        <title>RHL1 is an essential component of the plant DNA topoisomerase VI complex and is required for ploidy-dependent cell growth.</title>
        <authorList>
            <person name="Sugimoto-Shirasu K."/>
            <person name="Roberts G.R."/>
            <person name="Stacey N.J."/>
            <person name="McCann M.C."/>
            <person name="Maxwell A."/>
            <person name="Roberts K."/>
        </authorList>
    </citation>
    <scope>NUCLEOTIDE SEQUENCE [GENOMIC DNA]</scope>
    <scope>INTERACTION WITH RHL1</scope>
</reference>
<reference key="5">
    <citation type="journal article" date="2000" name="DNA Res.">
        <title>Structural analysis of Arabidopsis thaliana chromosome 3. I. Sequence features of the regions of 4,504,864 bp covered by sixty P1 and TAC clones.</title>
        <authorList>
            <person name="Sato S."/>
            <person name="Nakamura Y."/>
            <person name="Kaneko T."/>
            <person name="Katoh T."/>
            <person name="Asamizu E."/>
            <person name="Tabata S."/>
        </authorList>
    </citation>
    <scope>NUCLEOTIDE SEQUENCE [LARGE SCALE GENOMIC DNA]</scope>
    <source>
        <strain>cv. Columbia</strain>
    </source>
</reference>
<reference key="6">
    <citation type="journal article" date="2017" name="Plant J.">
        <title>Araport11: a complete reannotation of the Arabidopsis thaliana reference genome.</title>
        <authorList>
            <person name="Cheng C.Y."/>
            <person name="Krishnakumar V."/>
            <person name="Chan A.P."/>
            <person name="Thibaud-Nissen F."/>
            <person name="Schobel S."/>
            <person name="Town C.D."/>
        </authorList>
    </citation>
    <scope>GENOME REANNOTATION</scope>
    <source>
        <strain>cv. Columbia</strain>
    </source>
</reference>
<reference key="7">
    <citation type="journal article" date="2007" name="Plant Cell">
        <title>BIN4, a novel component of the plant DNA topoisomerase VI complex, is required for endoreduplication in Arabidopsis.</title>
        <authorList>
            <person name="Breuer C."/>
            <person name="Stacey N.J."/>
            <person name="West C.E."/>
            <person name="Zhao Y."/>
            <person name="Chory J."/>
            <person name="Tsukaya H."/>
            <person name="Azumi Y."/>
            <person name="Maxwell A."/>
            <person name="Roberts K."/>
            <person name="Sugimoto-Shirasu K."/>
        </authorList>
    </citation>
    <scope>INTERACTION WITH BIN4</scope>
</reference>
<evidence type="ECO:0000255" key="1">
    <source>
        <dbReference type="HAMAP-Rule" id="MF_03165"/>
    </source>
</evidence>
<evidence type="ECO:0000256" key="2">
    <source>
        <dbReference type="SAM" id="MobiDB-lite"/>
    </source>
</evidence>
<evidence type="ECO:0000269" key="3">
    <source>
    </source>
</evidence>
<evidence type="ECO:0000269" key="4">
    <source>
    </source>
</evidence>
<evidence type="ECO:0000269" key="5">
    <source>
    </source>
</evidence>
<evidence type="ECO:0000269" key="6">
    <source>
    </source>
</evidence>
<evidence type="ECO:0000269" key="7">
    <source>
    </source>
</evidence>
<evidence type="ECO:0000305" key="8"/>
<protein>
    <recommendedName>
        <fullName evidence="1">DNA topoisomerase 6 subunit B</fullName>
        <shortName>AtTOP6B</shortName>
        <ecNumber evidence="1">5.6.2.2</ecNumber>
    </recommendedName>
    <alternativeName>
        <fullName>Protein BRASSINOSTEROID INSENSITIVE 3</fullName>
    </alternativeName>
    <alternativeName>
        <fullName>Protein ELONGATED HYPOCOTYL 6</fullName>
    </alternativeName>
    <alternativeName>
        <fullName>Protein ROOT HAIRLESS 3</fullName>
    </alternativeName>
</protein>
<gene>
    <name evidence="1" type="primary">TOP6B</name>
    <name type="synonym">BIN3</name>
    <name type="synonym">HYP6</name>
    <name type="synonym">RHL3</name>
    <name type="ordered locus">At3g20780</name>
    <name type="ORF">MOE17.8</name>
</gene>
<comment type="function">
    <text evidence="1 4 5">Component of the DNA topoisomerase VI involved in chromatin organization and progression of endoreduplication cycles. Relaxes both positive and negative superturns and exhibits a strong decatenase activity. The B subunit binds ATP. Involved in cell-elongation processes.</text>
</comment>
<comment type="catalytic activity">
    <reaction evidence="1">
        <text>ATP-dependent breakage, passage and rejoining of double-stranded DNA.</text>
        <dbReference type="EC" id="5.6.2.2"/>
    </reaction>
</comment>
<comment type="subunit">
    <text evidence="1 3 6 7">Homodimer. Heterotetramer of two TOP6A and two TOP6B subunits. Interacts with SPO11-2, but not with SPO11-1, RHL1 or BIN4.</text>
</comment>
<comment type="interaction">
    <interactant intactId="EBI-1772132">
        <id>Q9C5V6</id>
    </interactant>
    <interactant intactId="EBI-1772104">
        <id>Q9LZ03</id>
        <label>TOP6A</label>
    </interactant>
    <organismsDiffer>false</organismsDiffer>
    <experiments>7</experiments>
</comment>
<comment type="subcellular location">
    <subcellularLocation>
        <location evidence="1">Nucleus</location>
    </subcellularLocation>
</comment>
<comment type="tissue specificity">
    <text evidence="3">Highly expressed in leaves, stems, flowers and seedlings.</text>
</comment>
<comment type="disruption phenotype">
    <text evidence="4">Plants are defective in cell elongation and show a severe dwarf phenotype.</text>
</comment>
<comment type="similarity">
    <text evidence="1">Belongs to the TOP6B family.</text>
</comment>
<comment type="sequence caution" evidence="8">
    <conflict type="erroneous gene model prediction">
        <sequence resource="EMBL-CDS" id="BAB02486"/>
    </conflict>
</comment>
<accession>Q9C5V6</accession>
<accession>Q9LT43</accession>
<keyword id="KW-0067">ATP-binding</keyword>
<keyword id="KW-0238">DNA-binding</keyword>
<keyword id="KW-0413">Isomerase</keyword>
<keyword id="KW-0547">Nucleotide-binding</keyword>
<keyword id="KW-0539">Nucleus</keyword>
<keyword id="KW-1185">Reference proteome</keyword>
<keyword id="KW-0799">Topoisomerase</keyword>
<name>TOP6B_ARATH</name>
<organism>
    <name type="scientific">Arabidopsis thaliana</name>
    <name type="common">Mouse-ear cress</name>
    <dbReference type="NCBI Taxonomy" id="3702"/>
    <lineage>
        <taxon>Eukaryota</taxon>
        <taxon>Viridiplantae</taxon>
        <taxon>Streptophyta</taxon>
        <taxon>Embryophyta</taxon>
        <taxon>Tracheophyta</taxon>
        <taxon>Spermatophyta</taxon>
        <taxon>Magnoliopsida</taxon>
        <taxon>eudicotyledons</taxon>
        <taxon>Gunneridae</taxon>
        <taxon>Pentapetalae</taxon>
        <taxon>rosids</taxon>
        <taxon>malvids</taxon>
        <taxon>Brassicales</taxon>
        <taxon>Brassicaceae</taxon>
        <taxon>Camelineae</taxon>
        <taxon>Arabidopsis</taxon>
    </lineage>
</organism>
<feature type="chain" id="PRO_0000346112" description="DNA topoisomerase 6 subunit B">
    <location>
        <begin position="1"/>
        <end position="670"/>
    </location>
</feature>
<feature type="region of interest" description="Disordered" evidence="2">
    <location>
        <begin position="1"/>
        <end position="30"/>
    </location>
</feature>
<feature type="compositionally biased region" description="Basic and acidic residues" evidence="2">
    <location>
        <begin position="7"/>
        <end position="25"/>
    </location>
</feature>
<feature type="binding site" evidence="1">
    <location>
        <position position="60"/>
    </location>
    <ligand>
        <name>ATP</name>
        <dbReference type="ChEBI" id="CHEBI:30616"/>
    </ligand>
</feature>
<feature type="binding site" evidence="1">
    <location>
        <position position="160"/>
    </location>
    <ligand>
        <name>ATP</name>
        <dbReference type="ChEBI" id="CHEBI:30616"/>
    </ligand>
</feature>
<feature type="binding site" evidence="1">
    <location>
        <begin position="181"/>
        <end position="182"/>
    </location>
    <ligand>
        <name>ATP</name>
        <dbReference type="ChEBI" id="CHEBI:30616"/>
    </ligand>
</feature>
<feature type="binding site" evidence="1">
    <location>
        <begin position="190"/>
        <end position="197"/>
    </location>
    <ligand>
        <name>ATP</name>
        <dbReference type="ChEBI" id="CHEBI:30616"/>
    </ligand>
</feature>
<feature type="binding site" evidence="1">
    <location>
        <position position="516"/>
    </location>
    <ligand>
        <name>ATP</name>
        <dbReference type="ChEBI" id="CHEBI:30616"/>
    </ligand>
</feature>
<proteinExistence type="evidence at protein level"/>
<sequence>MAGDDLVETKKGSSKNSKDSNESKLKQKSPAEFFAENKNIAGFDNPGKSLYTTVRELVENALDSAESISELPEVEVTIEEIVKSKFNSMIGLIDRERVDTQLYDDYETEKARGKRLAKEARASEIQAKNLASGKKNKEPGVSKVLKARGEASYYKVTCKDNGKGMPHDDIPNMFGRVLSGTKYGLKQTRGKFGLGAKMALIWSKMSTGLPIEISSSMKSQNYVTFCRLDIDIHRNIPHIHLHEKKGNKEKWHGAEIQVVIEGNWTTYRSKILHYMRQMAVITPYAQFLFRFISETPEKNVTIKFTRRTDVMPPIPIETKHHPSSVDLLLIKRLITDTSKKTLLQFLQNEFVNINKTLAARLIGEMGPDFGPSMAVKSVTSQQMVRIHQLFRQAKFDDPSGDCLSPAGEYNLRLGIIKELHPDMVATYSGSAQVFEGHPFIVEAGVSLGGRDVKQGINIFRFANRIPLLFEQGADVVTRTALKRINWNSYKINQTQDKIGVFVSIVSTKIPFKGTGKEYIGDDISEIATAVKSAIQQCCIQLKSKIVKRLQAREQQERKRSLSRYIPDATGAVYEVLKQMTEEHKTKRKRYGEEDIVMLDKVSKQIITKETLKEKLAEHVEQVDYEMALEYATQSGVSEEPRENIYLQHLDPNKSNFIDLHSPTFVFRLML</sequence>
<dbReference type="EC" id="5.6.2.2" evidence="1"/>
<dbReference type="EMBL" id="AJ297843">
    <property type="protein sequence ID" value="CAC24690.1"/>
    <property type="molecule type" value="mRNA"/>
</dbReference>
<dbReference type="EMBL" id="AB025629">
    <property type="protein sequence ID" value="BAB02486.1"/>
    <property type="status" value="ALT_SEQ"/>
    <property type="molecule type" value="Genomic_DNA"/>
</dbReference>
<dbReference type="EMBL" id="CP002686">
    <property type="protein sequence ID" value="AEE76422.1"/>
    <property type="molecule type" value="Genomic_DNA"/>
</dbReference>
<dbReference type="RefSeq" id="NP_188714.2">
    <property type="nucleotide sequence ID" value="NM_112969.3"/>
</dbReference>
<dbReference type="SMR" id="Q9C5V6"/>
<dbReference type="DIP" id="DIP-40170N"/>
<dbReference type="FunCoup" id="Q9C5V6">
    <property type="interactions" value="594"/>
</dbReference>
<dbReference type="IntAct" id="Q9C5V6">
    <property type="interactions" value="2"/>
</dbReference>
<dbReference type="STRING" id="3702.Q9C5V6"/>
<dbReference type="iPTMnet" id="Q9C5V6"/>
<dbReference type="PaxDb" id="3702-AT3G20780.1"/>
<dbReference type="ProteomicsDB" id="234444"/>
<dbReference type="EnsemblPlants" id="AT3G20780.1">
    <property type="protein sequence ID" value="AT3G20780.1"/>
    <property type="gene ID" value="AT3G20780"/>
</dbReference>
<dbReference type="GeneID" id="821626"/>
<dbReference type="Gramene" id="AT3G20780.1">
    <property type="protein sequence ID" value="AT3G20780.1"/>
    <property type="gene ID" value="AT3G20780"/>
</dbReference>
<dbReference type="KEGG" id="ath:AT3G20780"/>
<dbReference type="Araport" id="AT3G20780"/>
<dbReference type="TAIR" id="AT3G20780">
    <property type="gene designation" value="TOP6B"/>
</dbReference>
<dbReference type="eggNOG" id="ENOG502QQC0">
    <property type="taxonomic scope" value="Eukaryota"/>
</dbReference>
<dbReference type="HOGENOM" id="CLU_006403_1_0_1"/>
<dbReference type="InParanoid" id="Q9C5V6"/>
<dbReference type="OMA" id="VYRGNPF"/>
<dbReference type="PhylomeDB" id="Q9C5V6"/>
<dbReference type="CD-CODE" id="4299E36E">
    <property type="entry name" value="Nucleolus"/>
</dbReference>
<dbReference type="PRO" id="PR:Q9C5V6"/>
<dbReference type="Proteomes" id="UP000006548">
    <property type="component" value="Chromosome 3"/>
</dbReference>
<dbReference type="ExpressionAtlas" id="Q9C5V6">
    <property type="expression patterns" value="baseline and differential"/>
</dbReference>
<dbReference type="GO" id="GO:0009330">
    <property type="term" value="C:DNA topoisomerase type II (double strand cut, ATP-hydrolyzing) complex"/>
    <property type="evidence" value="ECO:0000250"/>
    <property type="project" value="TAIR"/>
</dbReference>
<dbReference type="GO" id="GO:0005634">
    <property type="term" value="C:nucleus"/>
    <property type="evidence" value="ECO:0007669"/>
    <property type="project" value="UniProtKB-SubCell"/>
</dbReference>
<dbReference type="GO" id="GO:0005524">
    <property type="term" value="F:ATP binding"/>
    <property type="evidence" value="ECO:0007669"/>
    <property type="project" value="UniProtKB-UniRule"/>
</dbReference>
<dbReference type="GO" id="GO:0003677">
    <property type="term" value="F:DNA binding"/>
    <property type="evidence" value="ECO:0007669"/>
    <property type="project" value="UniProtKB-UniRule"/>
</dbReference>
<dbReference type="GO" id="GO:0003918">
    <property type="term" value="F:DNA topoisomerase type II (double strand cut, ATP-hydrolyzing) activity"/>
    <property type="evidence" value="ECO:0000250"/>
    <property type="project" value="TAIR"/>
</dbReference>
<dbReference type="GO" id="GO:0042802">
    <property type="term" value="F:identical protein binding"/>
    <property type="evidence" value="ECO:0000353"/>
    <property type="project" value="TAIR"/>
</dbReference>
<dbReference type="GO" id="GO:0042803">
    <property type="term" value="F:protein homodimerization activity"/>
    <property type="evidence" value="ECO:0007669"/>
    <property type="project" value="EnsemblPlants"/>
</dbReference>
<dbReference type="GO" id="GO:0000902">
    <property type="term" value="P:cell morphogenesis"/>
    <property type="evidence" value="ECO:0000315"/>
    <property type="project" value="TAIR"/>
</dbReference>
<dbReference type="GO" id="GO:0042023">
    <property type="term" value="P:DNA endoreduplication"/>
    <property type="evidence" value="ECO:0000315"/>
    <property type="project" value="TAIR"/>
</dbReference>
<dbReference type="GO" id="GO:0006265">
    <property type="term" value="P:DNA topological change"/>
    <property type="evidence" value="ECO:0007669"/>
    <property type="project" value="UniProtKB-UniRule"/>
</dbReference>
<dbReference type="GO" id="GO:0007389">
    <property type="term" value="P:pattern specification process"/>
    <property type="evidence" value="ECO:0000315"/>
    <property type="project" value="TAIR"/>
</dbReference>
<dbReference type="GO" id="GO:0009741">
    <property type="term" value="P:response to brassinosteroid"/>
    <property type="evidence" value="ECO:0000315"/>
    <property type="project" value="TAIR"/>
</dbReference>
<dbReference type="GO" id="GO:0010026">
    <property type="term" value="P:trichome differentiation"/>
    <property type="evidence" value="ECO:0000315"/>
    <property type="project" value="TAIR"/>
</dbReference>
<dbReference type="CDD" id="cd00823">
    <property type="entry name" value="TopoIIB_Trans"/>
    <property type="match status" value="1"/>
</dbReference>
<dbReference type="FunFam" id="1.10.8.50:FF:000006">
    <property type="entry name" value="DNA topoisomerase 6 subunit B"/>
    <property type="match status" value="1"/>
</dbReference>
<dbReference type="FunFam" id="3.30.230.10:FF:000050">
    <property type="entry name" value="DNA topoisomerase 6 subunit B"/>
    <property type="match status" value="1"/>
</dbReference>
<dbReference type="FunFam" id="3.30.565.10:FF:000053">
    <property type="entry name" value="DNA topoisomerase 6 subunit B"/>
    <property type="match status" value="1"/>
</dbReference>
<dbReference type="Gene3D" id="1.10.8.50">
    <property type="match status" value="1"/>
</dbReference>
<dbReference type="Gene3D" id="3.30.230.10">
    <property type="match status" value="1"/>
</dbReference>
<dbReference type="Gene3D" id="3.30.565.10">
    <property type="entry name" value="Histidine kinase-like ATPase, C-terminal domain"/>
    <property type="match status" value="1"/>
</dbReference>
<dbReference type="HAMAP" id="MF_00322">
    <property type="entry name" value="Top6B"/>
    <property type="match status" value="1"/>
</dbReference>
<dbReference type="InterPro" id="IPR036890">
    <property type="entry name" value="HATPase_C_sf"/>
</dbReference>
<dbReference type="InterPro" id="IPR020568">
    <property type="entry name" value="Ribosomal_Su5_D2-typ_SF"/>
</dbReference>
<dbReference type="InterPro" id="IPR014721">
    <property type="entry name" value="Ribsml_uS5_D2-typ_fold_subgr"/>
</dbReference>
<dbReference type="InterPro" id="IPR005734">
    <property type="entry name" value="TopoVI_B"/>
</dbReference>
<dbReference type="InterPro" id="IPR015320">
    <property type="entry name" value="TopoVI_B_transducer"/>
</dbReference>
<dbReference type="NCBIfam" id="NF003218">
    <property type="entry name" value="PRK04184.1"/>
    <property type="match status" value="1"/>
</dbReference>
<dbReference type="PANTHER" id="PTHR48444">
    <property type="entry name" value="DNA TOPOISOMERASE 6 SUBUNIT B"/>
    <property type="match status" value="1"/>
</dbReference>
<dbReference type="PANTHER" id="PTHR48444:SF1">
    <property type="entry name" value="DNA TOPOISOMERASE 6 SUBUNIT B"/>
    <property type="match status" value="1"/>
</dbReference>
<dbReference type="Pfam" id="PF13589">
    <property type="entry name" value="HATPase_c_3"/>
    <property type="match status" value="1"/>
</dbReference>
<dbReference type="Pfam" id="PF09239">
    <property type="entry name" value="Topo-VIb_trans"/>
    <property type="match status" value="1"/>
</dbReference>
<dbReference type="SUPFAM" id="SSF55874">
    <property type="entry name" value="ATPase domain of HSP90 chaperone/DNA topoisomerase II/histidine kinase"/>
    <property type="match status" value="1"/>
</dbReference>
<dbReference type="SUPFAM" id="SSF54211">
    <property type="entry name" value="Ribosomal protein S5 domain 2-like"/>
    <property type="match status" value="1"/>
</dbReference>